<accession>Q7W482</accession>
<protein>
    <recommendedName>
        <fullName evidence="1">RNA pyrophosphohydrolase</fullName>
        <ecNumber evidence="1">3.6.1.-</ecNumber>
    </recommendedName>
    <alternativeName>
        <fullName evidence="1">(Di)nucleoside polyphosphate hydrolase</fullName>
    </alternativeName>
</protein>
<dbReference type="EC" id="3.6.1.-" evidence="1"/>
<dbReference type="EMBL" id="BX640434">
    <property type="protein sequence ID" value="CAE39069.1"/>
    <property type="molecule type" value="Genomic_DNA"/>
</dbReference>
<dbReference type="RefSeq" id="WP_003820729.1">
    <property type="nucleotide sequence ID" value="NC_002928.3"/>
</dbReference>
<dbReference type="SMR" id="Q7W482"/>
<dbReference type="KEGG" id="bpa:BPP3786"/>
<dbReference type="HOGENOM" id="CLU_087195_3_1_4"/>
<dbReference type="Proteomes" id="UP000001421">
    <property type="component" value="Chromosome"/>
</dbReference>
<dbReference type="GO" id="GO:0016462">
    <property type="term" value="F:pyrophosphatase activity"/>
    <property type="evidence" value="ECO:0007669"/>
    <property type="project" value="UniProtKB-ARBA"/>
</dbReference>
<dbReference type="CDD" id="cd03671">
    <property type="entry name" value="NUDIX_Ap4A_hydrolase_plant_like"/>
    <property type="match status" value="1"/>
</dbReference>
<dbReference type="FunFam" id="3.90.79.10:FF:000001">
    <property type="entry name" value="RNA pyrophosphohydrolase"/>
    <property type="match status" value="1"/>
</dbReference>
<dbReference type="Gene3D" id="3.90.79.10">
    <property type="entry name" value="Nucleoside Triphosphate Pyrophosphohydrolase"/>
    <property type="match status" value="1"/>
</dbReference>
<dbReference type="HAMAP" id="MF_00298">
    <property type="entry name" value="Nudix_RppH"/>
    <property type="match status" value="1"/>
</dbReference>
<dbReference type="InterPro" id="IPR020476">
    <property type="entry name" value="Nudix_hydrolase"/>
</dbReference>
<dbReference type="InterPro" id="IPR015797">
    <property type="entry name" value="NUDIX_hydrolase-like_dom_sf"/>
</dbReference>
<dbReference type="InterPro" id="IPR020084">
    <property type="entry name" value="NUDIX_hydrolase_CS"/>
</dbReference>
<dbReference type="InterPro" id="IPR000086">
    <property type="entry name" value="NUDIX_hydrolase_dom"/>
</dbReference>
<dbReference type="InterPro" id="IPR022927">
    <property type="entry name" value="RppH"/>
</dbReference>
<dbReference type="NCBIfam" id="NF001935">
    <property type="entry name" value="PRK00714.1-2"/>
    <property type="match status" value="1"/>
</dbReference>
<dbReference type="NCBIfam" id="NF001937">
    <property type="entry name" value="PRK00714.1-4"/>
    <property type="match status" value="1"/>
</dbReference>
<dbReference type="NCBIfam" id="NF001938">
    <property type="entry name" value="PRK00714.1-5"/>
    <property type="match status" value="1"/>
</dbReference>
<dbReference type="PANTHER" id="PTHR43736">
    <property type="entry name" value="ADP-RIBOSE PYROPHOSPHATASE"/>
    <property type="match status" value="1"/>
</dbReference>
<dbReference type="PANTHER" id="PTHR43736:SF1">
    <property type="entry name" value="DIHYDRONEOPTERIN TRIPHOSPHATE DIPHOSPHATASE"/>
    <property type="match status" value="1"/>
</dbReference>
<dbReference type="Pfam" id="PF00293">
    <property type="entry name" value="NUDIX"/>
    <property type="match status" value="1"/>
</dbReference>
<dbReference type="PRINTS" id="PR00502">
    <property type="entry name" value="NUDIXFAMILY"/>
</dbReference>
<dbReference type="SUPFAM" id="SSF55811">
    <property type="entry name" value="Nudix"/>
    <property type="match status" value="1"/>
</dbReference>
<dbReference type="PROSITE" id="PS51462">
    <property type="entry name" value="NUDIX"/>
    <property type="match status" value="1"/>
</dbReference>
<dbReference type="PROSITE" id="PS00893">
    <property type="entry name" value="NUDIX_BOX"/>
    <property type="match status" value="1"/>
</dbReference>
<evidence type="ECO:0000255" key="1">
    <source>
        <dbReference type="HAMAP-Rule" id="MF_00298"/>
    </source>
</evidence>
<evidence type="ECO:0000256" key="2">
    <source>
        <dbReference type="SAM" id="MobiDB-lite"/>
    </source>
</evidence>
<feature type="chain" id="PRO_0000056995" description="RNA pyrophosphohydrolase">
    <location>
        <begin position="1"/>
        <end position="190"/>
    </location>
</feature>
<feature type="domain" description="Nudix hydrolase" evidence="1">
    <location>
        <begin position="6"/>
        <end position="149"/>
    </location>
</feature>
<feature type="region of interest" description="Disordered" evidence="2">
    <location>
        <begin position="167"/>
        <end position="190"/>
    </location>
</feature>
<feature type="short sequence motif" description="Nudix box">
    <location>
        <begin position="38"/>
        <end position="59"/>
    </location>
</feature>
<reference key="1">
    <citation type="journal article" date="2003" name="Nat. Genet.">
        <title>Comparative analysis of the genome sequences of Bordetella pertussis, Bordetella parapertussis and Bordetella bronchiseptica.</title>
        <authorList>
            <person name="Parkhill J."/>
            <person name="Sebaihia M."/>
            <person name="Preston A."/>
            <person name="Murphy L.D."/>
            <person name="Thomson N.R."/>
            <person name="Harris D.E."/>
            <person name="Holden M.T.G."/>
            <person name="Churcher C.M."/>
            <person name="Bentley S.D."/>
            <person name="Mungall K.L."/>
            <person name="Cerdeno-Tarraga A.-M."/>
            <person name="Temple L."/>
            <person name="James K.D."/>
            <person name="Harris B."/>
            <person name="Quail M.A."/>
            <person name="Achtman M."/>
            <person name="Atkin R."/>
            <person name="Baker S."/>
            <person name="Basham D."/>
            <person name="Bason N."/>
            <person name="Cherevach I."/>
            <person name="Chillingworth T."/>
            <person name="Collins M."/>
            <person name="Cronin A."/>
            <person name="Davis P."/>
            <person name="Doggett J."/>
            <person name="Feltwell T."/>
            <person name="Goble A."/>
            <person name="Hamlin N."/>
            <person name="Hauser H."/>
            <person name="Holroyd S."/>
            <person name="Jagels K."/>
            <person name="Leather S."/>
            <person name="Moule S."/>
            <person name="Norberczak H."/>
            <person name="O'Neil S."/>
            <person name="Ormond D."/>
            <person name="Price C."/>
            <person name="Rabbinowitsch E."/>
            <person name="Rutter S."/>
            <person name="Sanders M."/>
            <person name="Saunders D."/>
            <person name="Seeger K."/>
            <person name="Sharp S."/>
            <person name="Simmonds M."/>
            <person name="Skelton J."/>
            <person name="Squares R."/>
            <person name="Squares S."/>
            <person name="Stevens K."/>
            <person name="Unwin L."/>
            <person name="Whitehead S."/>
            <person name="Barrell B.G."/>
            <person name="Maskell D.J."/>
        </authorList>
    </citation>
    <scope>NUCLEOTIDE SEQUENCE [LARGE SCALE GENOMIC DNA]</scope>
    <source>
        <strain>12822 / ATCC BAA-587 / NCTC 13253</strain>
    </source>
</reference>
<proteinExistence type="inferred from homology"/>
<keyword id="KW-0378">Hydrolase</keyword>
<sequence>MLDREGYRPNVGIILVNGKNEVFWGKRIREHAWQFPQGGIKYGESPVQAMYRELHEEVGLKPEHVRILGRTRDWLRYNVPDHFVRREWRGHYKGQKQIWFLLRLVGRDSDVCLRATQHPEFDAWRWSQYWVPLDAVIEFKRDVYTQALNELAVILFRRHHETRYLRQRVHGPRSTDNPSSETDGHAHIAG</sequence>
<comment type="function">
    <text evidence="1">Accelerates the degradation of transcripts by removing pyrophosphate from the 5'-end of triphosphorylated RNA, leading to a more labile monophosphorylated state that can stimulate subsequent ribonuclease cleavage.</text>
</comment>
<comment type="cofactor">
    <cofactor evidence="1">
        <name>a divalent metal cation</name>
        <dbReference type="ChEBI" id="CHEBI:60240"/>
    </cofactor>
</comment>
<comment type="similarity">
    <text evidence="1">Belongs to the Nudix hydrolase family. RppH subfamily.</text>
</comment>
<gene>
    <name evidence="1" type="primary">rppH</name>
    <name evidence="1" type="synonym">nudH</name>
    <name type="ordered locus">BPP3786</name>
</gene>
<organism>
    <name type="scientific">Bordetella parapertussis (strain 12822 / ATCC BAA-587 / NCTC 13253)</name>
    <dbReference type="NCBI Taxonomy" id="257311"/>
    <lineage>
        <taxon>Bacteria</taxon>
        <taxon>Pseudomonadati</taxon>
        <taxon>Pseudomonadota</taxon>
        <taxon>Betaproteobacteria</taxon>
        <taxon>Burkholderiales</taxon>
        <taxon>Alcaligenaceae</taxon>
        <taxon>Bordetella</taxon>
    </lineage>
</organism>
<name>RPPH_BORPA</name>